<reference key="1">
    <citation type="journal article" date="1993" name="FEBS Lett.">
        <title>Occurrence and sequence of a DnaJ protein in plant (Allium porrum) epidermal cells.</title>
        <authorList>
            <person name="Bessoule J.J."/>
        </authorList>
    </citation>
    <scope>NUCLEOTIDE SEQUENCE [MRNA]</scope>
</reference>
<accession>Q03363</accession>
<gene>
    <name type="primary">DNAJ1</name>
</gene>
<organism>
    <name type="scientific">Allium porrum</name>
    <name type="common">Leek</name>
    <name type="synonym">Allium ampeloprasum var. porrum</name>
    <dbReference type="NCBI Taxonomy" id="4681"/>
    <lineage>
        <taxon>Eukaryota</taxon>
        <taxon>Viridiplantae</taxon>
        <taxon>Streptophyta</taxon>
        <taxon>Embryophyta</taxon>
        <taxon>Tracheophyta</taxon>
        <taxon>Spermatophyta</taxon>
        <taxon>Magnoliopsida</taxon>
        <taxon>Liliopsida</taxon>
        <taxon>Asparagales</taxon>
        <taxon>Amaryllidaceae</taxon>
        <taxon>Allioideae</taxon>
        <taxon>Allieae</taxon>
        <taxon>Allium</taxon>
    </lineage>
</organism>
<protein>
    <recommendedName>
        <fullName>DnaJ protein homolog 1</fullName>
        <shortName>DNAJ-1</shortName>
    </recommendedName>
</protein>
<keyword id="KW-0143">Chaperone</keyword>
<keyword id="KW-0449">Lipoprotein</keyword>
<keyword id="KW-0472">Membrane</keyword>
<keyword id="KW-0479">Metal-binding</keyword>
<keyword id="KW-0488">Methylation</keyword>
<keyword id="KW-0636">Prenylation</keyword>
<keyword id="KW-0677">Repeat</keyword>
<keyword id="KW-0862">Zinc</keyword>
<keyword id="KW-0863">Zinc-finger</keyword>
<evidence type="ECO:0000250" key="1"/>
<evidence type="ECO:0000255" key="2">
    <source>
        <dbReference type="PROSITE-ProRule" id="PRU00286"/>
    </source>
</evidence>
<evidence type="ECO:0000255" key="3">
    <source>
        <dbReference type="PROSITE-ProRule" id="PRU00546"/>
    </source>
</evidence>
<evidence type="ECO:0000256" key="4">
    <source>
        <dbReference type="SAM" id="MobiDB-lite"/>
    </source>
</evidence>
<evidence type="ECO:0000305" key="5"/>
<dbReference type="EMBL" id="X69436">
    <property type="protein sequence ID" value="CAA49211.1"/>
    <property type="molecule type" value="mRNA"/>
</dbReference>
<dbReference type="PIR" id="S33312">
    <property type="entry name" value="S33312"/>
</dbReference>
<dbReference type="SMR" id="Q03363"/>
<dbReference type="GO" id="GO:0005783">
    <property type="term" value="C:endoplasmic reticulum"/>
    <property type="evidence" value="ECO:0007669"/>
    <property type="project" value="UniProtKB-ARBA"/>
</dbReference>
<dbReference type="GO" id="GO:0016020">
    <property type="term" value="C:membrane"/>
    <property type="evidence" value="ECO:0007669"/>
    <property type="project" value="UniProtKB-SubCell"/>
</dbReference>
<dbReference type="GO" id="GO:0030544">
    <property type="term" value="F:Hsp70 protein binding"/>
    <property type="evidence" value="ECO:0007669"/>
    <property type="project" value="InterPro"/>
</dbReference>
<dbReference type="GO" id="GO:0051082">
    <property type="term" value="F:unfolded protein binding"/>
    <property type="evidence" value="ECO:0007669"/>
    <property type="project" value="InterPro"/>
</dbReference>
<dbReference type="GO" id="GO:0008270">
    <property type="term" value="F:zinc ion binding"/>
    <property type="evidence" value="ECO:0007669"/>
    <property type="project" value="UniProtKB-KW"/>
</dbReference>
<dbReference type="GO" id="GO:0006457">
    <property type="term" value="P:protein folding"/>
    <property type="evidence" value="ECO:0007669"/>
    <property type="project" value="InterPro"/>
</dbReference>
<dbReference type="CDD" id="cd06257">
    <property type="entry name" value="DnaJ"/>
    <property type="match status" value="1"/>
</dbReference>
<dbReference type="CDD" id="cd10747">
    <property type="entry name" value="DnaJ_C"/>
    <property type="match status" value="1"/>
</dbReference>
<dbReference type="CDD" id="cd10719">
    <property type="entry name" value="DnaJ_zf"/>
    <property type="match status" value="1"/>
</dbReference>
<dbReference type="FunFam" id="2.60.260.20:FF:000068">
    <property type="entry name" value="Chaperone protein dnaJ 3"/>
    <property type="match status" value="1"/>
</dbReference>
<dbReference type="FunFam" id="2.10.230.10:FF:000001">
    <property type="entry name" value="DnaJ subfamily A member 2"/>
    <property type="match status" value="1"/>
</dbReference>
<dbReference type="FunFam" id="2.60.260.20:FF:000003">
    <property type="entry name" value="DnaJ subfamily A member 2"/>
    <property type="match status" value="1"/>
</dbReference>
<dbReference type="Gene3D" id="1.10.287.110">
    <property type="entry name" value="DnaJ domain"/>
    <property type="match status" value="1"/>
</dbReference>
<dbReference type="Gene3D" id="2.10.230.10">
    <property type="entry name" value="Heat shock protein DnaJ, cysteine-rich domain"/>
    <property type="match status" value="1"/>
</dbReference>
<dbReference type="Gene3D" id="2.60.260.20">
    <property type="entry name" value="Urease metallochaperone UreE, N-terminal domain"/>
    <property type="match status" value="2"/>
</dbReference>
<dbReference type="InterPro" id="IPR002939">
    <property type="entry name" value="DnaJ_C"/>
</dbReference>
<dbReference type="InterPro" id="IPR001623">
    <property type="entry name" value="DnaJ_domain"/>
</dbReference>
<dbReference type="InterPro" id="IPR018253">
    <property type="entry name" value="DnaJ_domain_CS"/>
</dbReference>
<dbReference type="InterPro" id="IPR044713">
    <property type="entry name" value="DNJA1/2-like"/>
</dbReference>
<dbReference type="InterPro" id="IPR008971">
    <property type="entry name" value="HSP40/DnaJ_pept-bd"/>
</dbReference>
<dbReference type="InterPro" id="IPR001305">
    <property type="entry name" value="HSP_DnaJ_Cys-rich_dom"/>
</dbReference>
<dbReference type="InterPro" id="IPR036410">
    <property type="entry name" value="HSP_DnaJ_Cys-rich_dom_sf"/>
</dbReference>
<dbReference type="InterPro" id="IPR036869">
    <property type="entry name" value="J_dom_sf"/>
</dbReference>
<dbReference type="PANTHER" id="PTHR43888">
    <property type="entry name" value="DNAJ-LIKE-2, ISOFORM A-RELATED"/>
    <property type="match status" value="1"/>
</dbReference>
<dbReference type="Pfam" id="PF00226">
    <property type="entry name" value="DnaJ"/>
    <property type="match status" value="1"/>
</dbReference>
<dbReference type="Pfam" id="PF01556">
    <property type="entry name" value="DnaJ_C"/>
    <property type="match status" value="1"/>
</dbReference>
<dbReference type="Pfam" id="PF00684">
    <property type="entry name" value="DnaJ_CXXCXGXG"/>
    <property type="match status" value="1"/>
</dbReference>
<dbReference type="PRINTS" id="PR00625">
    <property type="entry name" value="JDOMAIN"/>
</dbReference>
<dbReference type="SMART" id="SM00271">
    <property type="entry name" value="DnaJ"/>
    <property type="match status" value="1"/>
</dbReference>
<dbReference type="SUPFAM" id="SSF46565">
    <property type="entry name" value="Chaperone J-domain"/>
    <property type="match status" value="1"/>
</dbReference>
<dbReference type="SUPFAM" id="SSF57938">
    <property type="entry name" value="DnaJ/Hsp40 cysteine-rich domain"/>
    <property type="match status" value="1"/>
</dbReference>
<dbReference type="SUPFAM" id="SSF49493">
    <property type="entry name" value="HSP40/DnaJ peptide-binding domain"/>
    <property type="match status" value="2"/>
</dbReference>
<dbReference type="PROSITE" id="PS00636">
    <property type="entry name" value="DNAJ_1"/>
    <property type="match status" value="1"/>
</dbReference>
<dbReference type="PROSITE" id="PS50076">
    <property type="entry name" value="DNAJ_2"/>
    <property type="match status" value="1"/>
</dbReference>
<dbReference type="PROSITE" id="PS51188">
    <property type="entry name" value="ZF_CR"/>
    <property type="match status" value="1"/>
</dbReference>
<proteinExistence type="evidence at transcript level"/>
<sequence length="397" mass="44169">KNASPDDLKKAYRKAAIKNHPDKGGDPEKFKELAQAYDVLSDPEKREIYDQYGEDALKEGMGGGGGDHDPFDIFQSFFGGGGFGGGGSSRGRRQRRGEDVVHPLKVSLEELYNGTSKKLSLSRNVICSKCNGKGSKSGASMRCASCQGSGMKVSIRQLGPGMIQQMQHPCNDCKGTGEMINDKDRCPLCKGEKVVQEKKVLEVHVEKGMQNGQRITFPGEADEAPDTVTGDIVFVLQQKEHPKFQRKGDDLFYKHTLSLTEALCGFQFVLTHLDGRQLLIKSNPGEVVKPDQFKAINDEGMPMYQRPFMRGKLYIQFLVDFPDSLTPDQCKVIESVLPRSASSQLTDMEIDECEETTMHDVNIEEEMRRKQHQHAQEAYDEDDEGHGGGQRVQCAQQ</sequence>
<feature type="chain" id="PRO_0000071076" description="DnaJ protein homolog 1">
    <location>
        <begin position="1" status="less than"/>
        <end position="394"/>
    </location>
</feature>
<feature type="propeptide" id="PRO_0000396762" description="Removed in mature form" evidence="1">
    <location>
        <begin position="395"/>
        <end position="397"/>
    </location>
</feature>
<feature type="domain" description="J" evidence="2">
    <location>
        <begin position="1" status="less than"/>
        <end position="52"/>
    </location>
</feature>
<feature type="repeat" description="CXXCXGXG motif">
    <location>
        <begin position="127"/>
        <end position="134"/>
    </location>
</feature>
<feature type="repeat" description="CXXCXGXG motif">
    <location>
        <begin position="143"/>
        <end position="150"/>
    </location>
</feature>
<feature type="repeat" description="CXXCXGXG motif">
    <location>
        <begin position="170"/>
        <end position="177"/>
    </location>
</feature>
<feature type="repeat" description="CXXCXGXG motif">
    <location>
        <begin position="186"/>
        <end position="193"/>
    </location>
</feature>
<feature type="zinc finger region" description="CR-type" evidence="3">
    <location>
        <begin position="114"/>
        <end position="198"/>
    </location>
</feature>
<feature type="region of interest" description="Disordered" evidence="4">
    <location>
        <begin position="367"/>
        <end position="397"/>
    </location>
</feature>
<feature type="modified residue" description="Cysteine methyl ester" evidence="1">
    <location>
        <position position="394"/>
    </location>
</feature>
<feature type="lipid moiety-binding region" description="S-farnesyl cysteine" evidence="1">
    <location>
        <position position="394"/>
    </location>
</feature>
<feature type="non-terminal residue">
    <location>
        <position position="1"/>
    </location>
</feature>
<comment type="function">
    <text>Plays a continuous role in plant development probably in the structural organization of compartments.</text>
</comment>
<comment type="subcellular location">
    <subcellularLocation>
        <location evidence="5">Membrane</location>
        <topology evidence="5">Lipid-anchor</topology>
    </subcellularLocation>
</comment>
<name>DNJH1_ALLPO</name>